<comment type="subcellular location">
    <subcellularLocation>
        <location evidence="1">Nucleus</location>
    </subcellularLocation>
</comment>
<proteinExistence type="inferred from homology"/>
<gene>
    <name type="primary">mybJ</name>
    <name type="ORF">DDB_G0274463</name>
</gene>
<organism>
    <name type="scientific">Dictyostelium discoideum</name>
    <name type="common">Social amoeba</name>
    <dbReference type="NCBI Taxonomy" id="44689"/>
    <lineage>
        <taxon>Eukaryota</taxon>
        <taxon>Amoebozoa</taxon>
        <taxon>Evosea</taxon>
        <taxon>Eumycetozoa</taxon>
        <taxon>Dictyostelia</taxon>
        <taxon>Dictyosteliales</taxon>
        <taxon>Dictyosteliaceae</taxon>
        <taxon>Dictyostelium</taxon>
    </lineage>
</organism>
<reference key="1">
    <citation type="journal article" date="2002" name="Nature">
        <title>Sequence and analysis of chromosome 2 of Dictyostelium discoideum.</title>
        <authorList>
            <person name="Gloeckner G."/>
            <person name="Eichinger L."/>
            <person name="Szafranski K."/>
            <person name="Pachebat J.A."/>
            <person name="Bankier A.T."/>
            <person name="Dear P.H."/>
            <person name="Lehmann R."/>
            <person name="Baumgart C."/>
            <person name="Parra G."/>
            <person name="Abril J.F."/>
            <person name="Guigo R."/>
            <person name="Kumpf K."/>
            <person name="Tunggal B."/>
            <person name="Cox E.C."/>
            <person name="Quail M.A."/>
            <person name="Platzer M."/>
            <person name="Rosenthal A."/>
            <person name="Noegel A.A."/>
        </authorList>
    </citation>
    <scope>NUCLEOTIDE SEQUENCE [LARGE SCALE GENOMIC DNA]</scope>
    <source>
        <strain>AX4</strain>
    </source>
</reference>
<reference key="2">
    <citation type="journal article" date="2005" name="Nature">
        <title>The genome of the social amoeba Dictyostelium discoideum.</title>
        <authorList>
            <person name="Eichinger L."/>
            <person name="Pachebat J.A."/>
            <person name="Gloeckner G."/>
            <person name="Rajandream M.A."/>
            <person name="Sucgang R."/>
            <person name="Berriman M."/>
            <person name="Song J."/>
            <person name="Olsen R."/>
            <person name="Szafranski K."/>
            <person name="Xu Q."/>
            <person name="Tunggal B."/>
            <person name="Kummerfeld S."/>
            <person name="Madera M."/>
            <person name="Konfortov B.A."/>
            <person name="Rivero F."/>
            <person name="Bankier A.T."/>
            <person name="Lehmann R."/>
            <person name="Hamlin N."/>
            <person name="Davies R."/>
            <person name="Gaudet P."/>
            <person name="Fey P."/>
            <person name="Pilcher K."/>
            <person name="Chen G."/>
            <person name="Saunders D."/>
            <person name="Sodergren E.J."/>
            <person name="Davis P."/>
            <person name="Kerhornou A."/>
            <person name="Nie X."/>
            <person name="Hall N."/>
            <person name="Anjard C."/>
            <person name="Hemphill L."/>
            <person name="Bason N."/>
            <person name="Farbrother P."/>
            <person name="Desany B."/>
            <person name="Just E."/>
            <person name="Morio T."/>
            <person name="Rost R."/>
            <person name="Churcher C.M."/>
            <person name="Cooper J."/>
            <person name="Haydock S."/>
            <person name="van Driessche N."/>
            <person name="Cronin A."/>
            <person name="Goodhead I."/>
            <person name="Muzny D.M."/>
            <person name="Mourier T."/>
            <person name="Pain A."/>
            <person name="Lu M."/>
            <person name="Harper D."/>
            <person name="Lindsay R."/>
            <person name="Hauser H."/>
            <person name="James K.D."/>
            <person name="Quiles M."/>
            <person name="Madan Babu M."/>
            <person name="Saito T."/>
            <person name="Buchrieser C."/>
            <person name="Wardroper A."/>
            <person name="Felder M."/>
            <person name="Thangavelu M."/>
            <person name="Johnson D."/>
            <person name="Knights A."/>
            <person name="Loulseged H."/>
            <person name="Mungall K.L."/>
            <person name="Oliver K."/>
            <person name="Price C."/>
            <person name="Quail M.A."/>
            <person name="Urushihara H."/>
            <person name="Hernandez J."/>
            <person name="Rabbinowitsch E."/>
            <person name="Steffen D."/>
            <person name="Sanders M."/>
            <person name="Ma J."/>
            <person name="Kohara Y."/>
            <person name="Sharp S."/>
            <person name="Simmonds M.N."/>
            <person name="Spiegler S."/>
            <person name="Tivey A."/>
            <person name="Sugano S."/>
            <person name="White B."/>
            <person name="Walker D."/>
            <person name="Woodward J.R."/>
            <person name="Winckler T."/>
            <person name="Tanaka Y."/>
            <person name="Shaulsky G."/>
            <person name="Schleicher M."/>
            <person name="Weinstock G.M."/>
            <person name="Rosenthal A."/>
            <person name="Cox E.C."/>
            <person name="Chisholm R.L."/>
            <person name="Gibbs R.A."/>
            <person name="Loomis W.F."/>
            <person name="Platzer M."/>
            <person name="Kay R.R."/>
            <person name="Williams J.G."/>
            <person name="Dear P.H."/>
            <person name="Noegel A.A."/>
            <person name="Barrell B.G."/>
            <person name="Kuspa A."/>
        </authorList>
    </citation>
    <scope>NUCLEOTIDE SEQUENCE [LARGE SCALE GENOMIC DNA]</scope>
    <source>
        <strain>AX4</strain>
    </source>
</reference>
<protein>
    <recommendedName>
        <fullName>Myb-like protein J</fullName>
    </recommendedName>
</protein>
<evidence type="ECO:0000255" key="1">
    <source>
        <dbReference type="PROSITE-ProRule" id="PRU00625"/>
    </source>
</evidence>
<evidence type="ECO:0000256" key="2">
    <source>
        <dbReference type="SAM" id="MobiDB-lite"/>
    </source>
</evidence>
<keyword id="KW-0238">DNA-binding</keyword>
<keyword id="KW-0539">Nucleus</keyword>
<keyword id="KW-1185">Reference proteome</keyword>
<keyword id="KW-0804">Transcription</keyword>
<keyword id="KW-0805">Transcription regulation</keyword>
<sequence>MPNNQQNQIESPSKNTSNVGGSTLLNNNSPPFKSNGNLNSIPNGFNFLSSTSFHGGFGSLFSPDYAFNEQASSITSNSNLNILNNDSFDKNFGQSFFNSFSSLGSFNQTQQQKEALLSFQNSYLQQQQKDQQQKEQQKEQQKEQQQQEEQEQQQKEQQPNESNTTTTTTTTTTAVEQQGAEQQDTNLNSTSSPTMMTDVVFNTNDHVDFASANNNVMVTSSPISSSLNNSQDNTKPVSPDNIENTSNPMDTSSSNGKTPTITPIVTPITTPVVTPSSTPLSTPLSTPLSTPLSTPVAPIFNSPTTSTSSTHSNTSTPITVSIINNNNNNNSNSNNNNNNNNNNNNNNTNNTTTTTTTATTTSGGKTNPTGKKTSLKQGWTKEEHIRFLNGIQIHGKGAWKEIAQFVGTRTPTQIQSHAQKYYLRQKQETKNKRSIHDLSLQDLIDDNLNNSNKNNVDKNKQDDKEKKTQKTKKTKSKSSTKGDEEMITQQQQLQQQPQQQPQQKQPPTIITNFNTTPTSSQSSPKSNSPSSPSSPQSFQSSQTEQVVGKLFSPFYRANDGDDSNVRHIPKSFLNNNNSNNNNSNINGINNNNGNGNGNMDMNSNNINSFGNNEGNILRHQNSHQIPPPPPPPIQHVQYQMDFQRQYLPHHTPQPPPPPPIQQMAPIFPIYNGSNIHDINGNNHNNNNNNNNNINNGWIQSPININSQMQPQIHQQFPQNFYQYNPYSAPPPTLQ</sequence>
<dbReference type="EMBL" id="AAFI02000012">
    <property type="protein sequence ID" value="EAL70124.1"/>
    <property type="molecule type" value="Genomic_DNA"/>
</dbReference>
<dbReference type="RefSeq" id="XP_644160.1">
    <property type="nucleotide sequence ID" value="XM_639068.1"/>
</dbReference>
<dbReference type="SMR" id="Q869R9"/>
<dbReference type="FunCoup" id="Q869R9">
    <property type="interactions" value="877"/>
</dbReference>
<dbReference type="STRING" id="44689.Q869R9"/>
<dbReference type="PaxDb" id="44689-DDB0220506"/>
<dbReference type="EnsemblProtists" id="EAL70124">
    <property type="protein sequence ID" value="EAL70124"/>
    <property type="gene ID" value="DDB_G0274463"/>
</dbReference>
<dbReference type="GeneID" id="8619589"/>
<dbReference type="KEGG" id="ddi:DDB_G0274463"/>
<dbReference type="dictyBase" id="DDB_G0274463">
    <property type="gene designation" value="mybJ"/>
</dbReference>
<dbReference type="VEuPathDB" id="AmoebaDB:DDB_G0274463"/>
<dbReference type="eggNOG" id="KOG0724">
    <property type="taxonomic scope" value="Eukaryota"/>
</dbReference>
<dbReference type="HOGENOM" id="CLU_377872_0_0_1"/>
<dbReference type="InParanoid" id="Q869R9"/>
<dbReference type="OMA" id="HGKGAWK"/>
<dbReference type="PRO" id="PR:Q869R9"/>
<dbReference type="Proteomes" id="UP000002195">
    <property type="component" value="Chromosome 2"/>
</dbReference>
<dbReference type="GO" id="GO:0005634">
    <property type="term" value="C:nucleus"/>
    <property type="evidence" value="ECO:0007669"/>
    <property type="project" value="UniProtKB-SubCell"/>
</dbReference>
<dbReference type="GO" id="GO:0003677">
    <property type="term" value="F:DNA binding"/>
    <property type="evidence" value="ECO:0000250"/>
    <property type="project" value="dictyBase"/>
</dbReference>
<dbReference type="GO" id="GO:0006355">
    <property type="term" value="P:regulation of DNA-templated transcription"/>
    <property type="evidence" value="ECO:0007669"/>
    <property type="project" value="UniProtKB-ARBA"/>
</dbReference>
<dbReference type="CDD" id="cd00167">
    <property type="entry name" value="SANT"/>
    <property type="match status" value="1"/>
</dbReference>
<dbReference type="Gene3D" id="1.10.10.60">
    <property type="entry name" value="Homeodomain-like"/>
    <property type="match status" value="1"/>
</dbReference>
<dbReference type="InterPro" id="IPR009057">
    <property type="entry name" value="Homeodomain-like_sf"/>
</dbReference>
<dbReference type="InterPro" id="IPR017930">
    <property type="entry name" value="Myb_dom"/>
</dbReference>
<dbReference type="InterPro" id="IPR006447">
    <property type="entry name" value="Myb_dom_plants"/>
</dbReference>
<dbReference type="InterPro" id="IPR052245">
    <property type="entry name" value="Plant_Stress_Dev_TF"/>
</dbReference>
<dbReference type="InterPro" id="IPR001005">
    <property type="entry name" value="SANT/Myb"/>
</dbReference>
<dbReference type="InterPro" id="IPR017884">
    <property type="entry name" value="SANT_dom"/>
</dbReference>
<dbReference type="NCBIfam" id="TIGR01557">
    <property type="entry name" value="myb_SHAQKYF"/>
    <property type="match status" value="1"/>
</dbReference>
<dbReference type="PANTHER" id="PTHR44191:SF62">
    <property type="entry name" value="OS04G0341900 PROTEIN"/>
    <property type="match status" value="1"/>
</dbReference>
<dbReference type="PANTHER" id="PTHR44191">
    <property type="entry name" value="TRANSCRIPTION FACTOR KUA1"/>
    <property type="match status" value="1"/>
</dbReference>
<dbReference type="Pfam" id="PF00249">
    <property type="entry name" value="Myb_DNA-binding"/>
    <property type="match status" value="1"/>
</dbReference>
<dbReference type="SMART" id="SM00717">
    <property type="entry name" value="SANT"/>
    <property type="match status" value="1"/>
</dbReference>
<dbReference type="SUPFAM" id="SSF46689">
    <property type="entry name" value="Homeodomain-like"/>
    <property type="match status" value="1"/>
</dbReference>
<dbReference type="PROSITE" id="PS51294">
    <property type="entry name" value="HTH_MYB"/>
    <property type="match status" value="1"/>
</dbReference>
<name>MYBJ_DICDI</name>
<feature type="chain" id="PRO_0000329385" description="Myb-like protein J">
    <location>
        <begin position="1"/>
        <end position="734"/>
    </location>
</feature>
<feature type="domain" description="HTH myb-type" evidence="1">
    <location>
        <begin position="371"/>
        <end position="426"/>
    </location>
</feature>
<feature type="DNA-binding region" description="H-T-H motif" evidence="1">
    <location>
        <begin position="399"/>
        <end position="422"/>
    </location>
</feature>
<feature type="region of interest" description="Disordered" evidence="2">
    <location>
        <begin position="1"/>
        <end position="35"/>
    </location>
</feature>
<feature type="region of interest" description="Disordered" evidence="2">
    <location>
        <begin position="128"/>
        <end position="196"/>
    </location>
</feature>
<feature type="region of interest" description="Disordered" evidence="2">
    <location>
        <begin position="221"/>
        <end position="378"/>
    </location>
</feature>
<feature type="region of interest" description="Disordered" evidence="2">
    <location>
        <begin position="445"/>
        <end position="623"/>
    </location>
</feature>
<feature type="compositionally biased region" description="Basic and acidic residues" evidence="2">
    <location>
        <begin position="131"/>
        <end position="142"/>
    </location>
</feature>
<feature type="compositionally biased region" description="Low complexity" evidence="2">
    <location>
        <begin position="164"/>
        <end position="173"/>
    </location>
</feature>
<feature type="compositionally biased region" description="Polar residues" evidence="2">
    <location>
        <begin position="174"/>
        <end position="196"/>
    </location>
</feature>
<feature type="compositionally biased region" description="Low complexity" evidence="2">
    <location>
        <begin position="221"/>
        <end position="230"/>
    </location>
</feature>
<feature type="compositionally biased region" description="Polar residues" evidence="2">
    <location>
        <begin position="231"/>
        <end position="257"/>
    </location>
</feature>
<feature type="compositionally biased region" description="Low complexity" evidence="2">
    <location>
        <begin position="258"/>
        <end position="372"/>
    </location>
</feature>
<feature type="compositionally biased region" description="Low complexity" evidence="2">
    <location>
        <begin position="445"/>
        <end position="454"/>
    </location>
</feature>
<feature type="compositionally biased region" description="Basic and acidic residues" evidence="2">
    <location>
        <begin position="455"/>
        <end position="468"/>
    </location>
</feature>
<feature type="compositionally biased region" description="Basic residues" evidence="2">
    <location>
        <begin position="469"/>
        <end position="478"/>
    </location>
</feature>
<feature type="compositionally biased region" description="Low complexity" evidence="2">
    <location>
        <begin position="489"/>
        <end position="543"/>
    </location>
</feature>
<feature type="compositionally biased region" description="Low complexity" evidence="2">
    <location>
        <begin position="574"/>
        <end position="615"/>
    </location>
</feature>
<accession>Q869R9</accession>
<accession>Q555B3</accession>